<name>DST2_DICDI</name>
<keyword id="KW-0067">ATP-binding</keyword>
<keyword id="KW-0175">Coiled coil</keyword>
<keyword id="KW-0418">Kinase</keyword>
<keyword id="KW-0460">Magnesium</keyword>
<keyword id="KW-0479">Metal-binding</keyword>
<keyword id="KW-0547">Nucleotide-binding</keyword>
<keyword id="KW-1185">Reference proteome</keyword>
<keyword id="KW-0723">Serine/threonine-protein kinase</keyword>
<keyword id="KW-0808">Transferase</keyword>
<comment type="catalytic activity">
    <reaction evidence="2">
        <text>L-seryl-[protein] + ATP = O-phospho-L-seryl-[protein] + ADP + H(+)</text>
        <dbReference type="Rhea" id="RHEA:17989"/>
        <dbReference type="Rhea" id="RHEA-COMP:9863"/>
        <dbReference type="Rhea" id="RHEA-COMP:11604"/>
        <dbReference type="ChEBI" id="CHEBI:15378"/>
        <dbReference type="ChEBI" id="CHEBI:29999"/>
        <dbReference type="ChEBI" id="CHEBI:30616"/>
        <dbReference type="ChEBI" id="CHEBI:83421"/>
        <dbReference type="ChEBI" id="CHEBI:456216"/>
        <dbReference type="EC" id="2.7.11.1"/>
    </reaction>
</comment>
<comment type="catalytic activity">
    <reaction evidence="2">
        <text>L-threonyl-[protein] + ATP = O-phospho-L-threonyl-[protein] + ADP + H(+)</text>
        <dbReference type="Rhea" id="RHEA:46608"/>
        <dbReference type="Rhea" id="RHEA-COMP:11060"/>
        <dbReference type="Rhea" id="RHEA-COMP:11605"/>
        <dbReference type="ChEBI" id="CHEBI:15378"/>
        <dbReference type="ChEBI" id="CHEBI:30013"/>
        <dbReference type="ChEBI" id="CHEBI:30616"/>
        <dbReference type="ChEBI" id="CHEBI:61977"/>
        <dbReference type="ChEBI" id="CHEBI:456216"/>
        <dbReference type="EC" id="2.7.11.1"/>
    </reaction>
</comment>
<comment type="cofactor">
    <cofactor evidence="1">
        <name>Mg(2+)</name>
        <dbReference type="ChEBI" id="CHEBI:18420"/>
    </cofactor>
</comment>
<comment type="similarity">
    <text evidence="2">Belongs to the protein kinase superfamily. STE Ser/Thr protein kinase family. STE20 subfamily.</text>
</comment>
<protein>
    <recommendedName>
        <fullName evidence="2">Serine/threonine-protein kinase dst2</fullName>
        <ecNumber>2.7.11.1</ecNumber>
    </recommendedName>
</protein>
<organism>
    <name type="scientific">Dictyostelium discoideum</name>
    <name type="common">Social amoeba</name>
    <dbReference type="NCBI Taxonomy" id="44689"/>
    <lineage>
        <taxon>Eukaryota</taxon>
        <taxon>Amoebozoa</taxon>
        <taxon>Evosea</taxon>
        <taxon>Eumycetozoa</taxon>
        <taxon>Dictyostelia</taxon>
        <taxon>Dictyosteliales</taxon>
        <taxon>Dictyosteliaceae</taxon>
        <taxon>Dictyostelium</taxon>
    </lineage>
</organism>
<feature type="chain" id="PRO_0000355580" description="Serine/threonine-protein kinase dst2">
    <location>
        <begin position="1"/>
        <end position="1142"/>
    </location>
</feature>
<feature type="domain" description="Protein kinase" evidence="5">
    <location>
        <begin position="20"/>
        <end position="276"/>
    </location>
</feature>
<feature type="region of interest" description="Disordered" evidence="7">
    <location>
        <begin position="300"/>
        <end position="492"/>
    </location>
</feature>
<feature type="region of interest" description="Disordered" evidence="7">
    <location>
        <begin position="515"/>
        <end position="636"/>
    </location>
</feature>
<feature type="region of interest" description="Disordered" evidence="7">
    <location>
        <begin position="744"/>
        <end position="768"/>
    </location>
</feature>
<feature type="region of interest" description="Disordered" evidence="7">
    <location>
        <begin position="939"/>
        <end position="974"/>
    </location>
</feature>
<feature type="region of interest" description="Disordered" evidence="7">
    <location>
        <begin position="1040"/>
        <end position="1142"/>
    </location>
</feature>
<feature type="coiled-coil region" evidence="4">
    <location>
        <begin position="716"/>
        <end position="1050"/>
    </location>
</feature>
<feature type="compositionally biased region" description="Acidic residues" evidence="7">
    <location>
        <begin position="300"/>
        <end position="322"/>
    </location>
</feature>
<feature type="compositionally biased region" description="Basic and acidic residues" evidence="7">
    <location>
        <begin position="323"/>
        <end position="336"/>
    </location>
</feature>
<feature type="compositionally biased region" description="Polar residues" evidence="7">
    <location>
        <begin position="355"/>
        <end position="365"/>
    </location>
</feature>
<feature type="compositionally biased region" description="Low complexity" evidence="7">
    <location>
        <begin position="371"/>
        <end position="390"/>
    </location>
</feature>
<feature type="compositionally biased region" description="Polar residues" evidence="7">
    <location>
        <begin position="391"/>
        <end position="413"/>
    </location>
</feature>
<feature type="compositionally biased region" description="Low complexity" evidence="7">
    <location>
        <begin position="421"/>
        <end position="452"/>
    </location>
</feature>
<feature type="compositionally biased region" description="Basic and acidic residues" evidence="7">
    <location>
        <begin position="467"/>
        <end position="477"/>
    </location>
</feature>
<feature type="compositionally biased region" description="Low complexity" evidence="7">
    <location>
        <begin position="541"/>
        <end position="554"/>
    </location>
</feature>
<feature type="compositionally biased region" description="Basic and acidic residues" evidence="7">
    <location>
        <begin position="555"/>
        <end position="588"/>
    </location>
</feature>
<feature type="compositionally biased region" description="Basic and acidic residues" evidence="7">
    <location>
        <begin position="597"/>
        <end position="635"/>
    </location>
</feature>
<feature type="compositionally biased region" description="Basic and acidic residues" evidence="7">
    <location>
        <begin position="744"/>
        <end position="760"/>
    </location>
</feature>
<feature type="compositionally biased region" description="Basic and acidic residues" evidence="7">
    <location>
        <begin position="939"/>
        <end position="969"/>
    </location>
</feature>
<feature type="compositionally biased region" description="Low complexity" evidence="7">
    <location>
        <begin position="1068"/>
        <end position="1091"/>
    </location>
</feature>
<feature type="active site" description="Proton acceptor" evidence="3 5 6">
    <location>
        <position position="141"/>
    </location>
</feature>
<feature type="binding site" evidence="3 5">
    <location>
        <begin position="26"/>
        <end position="34"/>
    </location>
    <ligand>
        <name>ATP</name>
        <dbReference type="ChEBI" id="CHEBI:30616"/>
    </ligand>
</feature>
<feature type="binding site" evidence="3 5">
    <location>
        <position position="49"/>
    </location>
    <ligand>
        <name>ATP</name>
        <dbReference type="ChEBI" id="CHEBI:30616"/>
    </ligand>
</feature>
<evidence type="ECO:0000250" key="1"/>
<evidence type="ECO:0000250" key="2">
    <source>
        <dbReference type="UniProtKB" id="O61125"/>
    </source>
</evidence>
<evidence type="ECO:0000250" key="3">
    <source>
        <dbReference type="UniProtKB" id="P28523"/>
    </source>
</evidence>
<evidence type="ECO:0000255" key="4"/>
<evidence type="ECO:0000255" key="5">
    <source>
        <dbReference type="PROSITE-ProRule" id="PRU00159"/>
    </source>
</evidence>
<evidence type="ECO:0000255" key="6">
    <source>
        <dbReference type="PROSITE-ProRule" id="PRU10027"/>
    </source>
</evidence>
<evidence type="ECO:0000256" key="7">
    <source>
        <dbReference type="SAM" id="MobiDB-lite"/>
    </source>
</evidence>
<evidence type="ECO:0000303" key="8">
    <source>
    </source>
</evidence>
<evidence type="ECO:0000305" key="9"/>
<evidence type="ECO:0000312" key="10">
    <source>
        <dbReference type="EMBL" id="EAL73318.1"/>
    </source>
</evidence>
<sequence length="1142" mass="130779">MANIAALEPFVGKEDPVELFELIEEIAEGSFGTVYKGKHLPTGNIMAVKIIALDEDETFEDLVVEIDILNRCNHNNIVKYYGSWVKGDELFIAMECCGGGSITEIYQELNIPLNESQIAYVCRETLKGLEYLHHTNVIHRDLKGANILLTESGDVKLADFGVSGLLDKSSKRNTFIGTPYWMAPEVIENRSNPVPYDTKADIWSLGITLIELAEAEPPLSEIHPMKVLFQIPYRDPPKLKNQENYSKDFINFIQSCLQKDPNQRKTATELLKHPFVTNTKEKAVLTDLITKYRKFRAAELEEGGDEDEDSSEQEGMDSDDKDSDLKKSVGTSDRKSTLIANGSTSSLSPPASPSQRKSTGQNLQLPQIIEQQSSSSSSSSSSSLSSQSLQPQAVNKSTDRLSANINGSNTKSNTIDKKTTAAASASASSLNLSTGNLQQSLSGSGSITTNSGVGNGTSGKPTTNGKSSDDRSPDIRTNRKAGRPVTIRKTLEKRNDAVKKIVNAKLMKQQLKDIKKQQQKQQEEEEQLLKQQQKEKDDLLKQNAAKATQQQKQSAAKEEKIQKQHKVEKETLSRQQKADREQLLKKNQSDCSKQRTKVTDQQKQQQREFKDQQKQQQKQKEHEFKDQNKVLDKSTPKKLSKHIAIHQKVIREQEICVQDLVFQQKQDFQKLVDDHQNATQNLFLENKQQSEQLFAWHTQQNQQFQFQQQCQLENYQEYHTVLRENMNAEHQLAKSQLEHSHLSETNHLKERQVTETEQHIKQMTTEQRNSLKEFKLKQTQDFKEFLNKLKKELKDEKGNKKQLQQQHKEQKKQFELTLSTQEVDFQKKQARQKEEEDDILLTHQKESFKRLQDKQQNIIRDIEEHCKLQRQQFETEYTFNEEEMLIEHYRQKKALLKQQHSEQKQIYQEQTQLQYRLLQEQHKESPALLTDQHLKQKESIEEQQKERLTLQQEEHRIQQESLKKQEQKKKGSVTDLPASLASMQLEQSKQLQLLSEQLQAELATMFERHTKETQSLQAELAKAQEKLQSDQQKLLHDLTEEQKKSKLKLKSESPSCKENPLHMKKKSTGTTPPSTSSNQKTLNNSNGASSNGHHHHHHQSAGVGGSGGTISSSHNTPVLPHNMKHQRSFSTSLPSFKFDNQD</sequence>
<dbReference type="EC" id="2.7.11.1"/>
<dbReference type="EMBL" id="AAFI02000003">
    <property type="protein sequence ID" value="EAL73318.1"/>
    <property type="molecule type" value="Genomic_DNA"/>
</dbReference>
<dbReference type="RefSeq" id="XP_647262.1">
    <property type="nucleotide sequence ID" value="XM_642170.1"/>
</dbReference>
<dbReference type="SMR" id="Q55GC2"/>
<dbReference type="FunCoup" id="Q55GC2">
    <property type="interactions" value="426"/>
</dbReference>
<dbReference type="STRING" id="44689.Q55GC2"/>
<dbReference type="PaxDb" id="44689-DDB0216378"/>
<dbReference type="EnsemblProtists" id="EAL73318">
    <property type="protein sequence ID" value="EAL73318"/>
    <property type="gene ID" value="DDB_G0267730"/>
</dbReference>
<dbReference type="GeneID" id="8616067"/>
<dbReference type="KEGG" id="ddi:DDB_G0267730"/>
<dbReference type="dictyBase" id="DDB_G0267730">
    <property type="gene designation" value="dst2"/>
</dbReference>
<dbReference type="VEuPathDB" id="AmoebaDB:DDB_G0267730"/>
<dbReference type="eggNOG" id="KOG0576">
    <property type="taxonomic scope" value="Eukaryota"/>
</dbReference>
<dbReference type="HOGENOM" id="CLU_277632_0_0_1"/>
<dbReference type="InParanoid" id="Q55GC2"/>
<dbReference type="OMA" id="XAKVMAN"/>
<dbReference type="Reactome" id="R-DDI-6798695">
    <property type="pathway name" value="Neutrophil degranulation"/>
</dbReference>
<dbReference type="PRO" id="PR:Q55GC2"/>
<dbReference type="Proteomes" id="UP000002195">
    <property type="component" value="Chromosome 1"/>
</dbReference>
<dbReference type="GO" id="GO:0005737">
    <property type="term" value="C:cytoplasm"/>
    <property type="evidence" value="ECO:0000318"/>
    <property type="project" value="GO_Central"/>
</dbReference>
<dbReference type="GO" id="GO:0005524">
    <property type="term" value="F:ATP binding"/>
    <property type="evidence" value="ECO:0007669"/>
    <property type="project" value="UniProtKB-KW"/>
</dbReference>
<dbReference type="GO" id="GO:0046872">
    <property type="term" value="F:metal ion binding"/>
    <property type="evidence" value="ECO:0007669"/>
    <property type="project" value="UniProtKB-KW"/>
</dbReference>
<dbReference type="GO" id="GO:0106310">
    <property type="term" value="F:protein serine kinase activity"/>
    <property type="evidence" value="ECO:0007669"/>
    <property type="project" value="RHEA"/>
</dbReference>
<dbReference type="GO" id="GO:0004674">
    <property type="term" value="F:protein serine/threonine kinase activity"/>
    <property type="evidence" value="ECO:0000318"/>
    <property type="project" value="GO_Central"/>
</dbReference>
<dbReference type="GO" id="GO:0035556">
    <property type="term" value="P:intracellular signal transduction"/>
    <property type="evidence" value="ECO:0000318"/>
    <property type="project" value="GO_Central"/>
</dbReference>
<dbReference type="CDD" id="cd06613">
    <property type="entry name" value="STKc_MAP4K3_like"/>
    <property type="match status" value="1"/>
</dbReference>
<dbReference type="FunFam" id="1.10.510.10:FF:000499">
    <property type="entry name" value="Serine/threonine-protein kinase KIC1"/>
    <property type="match status" value="1"/>
</dbReference>
<dbReference type="Gene3D" id="1.10.510.10">
    <property type="entry name" value="Transferase(Phosphotransferase) domain 1"/>
    <property type="match status" value="1"/>
</dbReference>
<dbReference type="InterPro" id="IPR011009">
    <property type="entry name" value="Kinase-like_dom_sf"/>
</dbReference>
<dbReference type="InterPro" id="IPR000719">
    <property type="entry name" value="Prot_kinase_dom"/>
</dbReference>
<dbReference type="InterPro" id="IPR008271">
    <property type="entry name" value="Ser/Thr_kinase_AS"/>
</dbReference>
<dbReference type="InterPro" id="IPR050629">
    <property type="entry name" value="STE20/SPS1-PAK"/>
</dbReference>
<dbReference type="PANTHER" id="PTHR48012:SF2">
    <property type="entry name" value="STERILE20-LIKE KINASE, ISOFORM B"/>
    <property type="match status" value="1"/>
</dbReference>
<dbReference type="PANTHER" id="PTHR48012">
    <property type="entry name" value="STERILE20-LIKE KINASE, ISOFORM B-RELATED"/>
    <property type="match status" value="1"/>
</dbReference>
<dbReference type="Pfam" id="PF00069">
    <property type="entry name" value="Pkinase"/>
    <property type="match status" value="1"/>
</dbReference>
<dbReference type="SMART" id="SM00220">
    <property type="entry name" value="S_TKc"/>
    <property type="match status" value="1"/>
</dbReference>
<dbReference type="SUPFAM" id="SSF56112">
    <property type="entry name" value="Protein kinase-like (PK-like)"/>
    <property type="match status" value="1"/>
</dbReference>
<dbReference type="PROSITE" id="PS50011">
    <property type="entry name" value="PROTEIN_KINASE_DOM"/>
    <property type="match status" value="1"/>
</dbReference>
<dbReference type="PROSITE" id="PS00108">
    <property type="entry name" value="PROTEIN_KINASE_ST"/>
    <property type="match status" value="1"/>
</dbReference>
<gene>
    <name evidence="10" type="primary">dst2</name>
    <name evidence="8" type="synonym">dstB</name>
    <name type="ORF">DDB_G0267730</name>
</gene>
<reference key="1">
    <citation type="journal article" date="2005" name="Nature">
        <title>The genome of the social amoeba Dictyostelium discoideum.</title>
        <authorList>
            <person name="Eichinger L."/>
            <person name="Pachebat J.A."/>
            <person name="Gloeckner G."/>
            <person name="Rajandream M.A."/>
            <person name="Sucgang R."/>
            <person name="Berriman M."/>
            <person name="Song J."/>
            <person name="Olsen R."/>
            <person name="Szafranski K."/>
            <person name="Xu Q."/>
            <person name="Tunggal B."/>
            <person name="Kummerfeld S."/>
            <person name="Madera M."/>
            <person name="Konfortov B.A."/>
            <person name="Rivero F."/>
            <person name="Bankier A.T."/>
            <person name="Lehmann R."/>
            <person name="Hamlin N."/>
            <person name="Davies R."/>
            <person name="Gaudet P."/>
            <person name="Fey P."/>
            <person name="Pilcher K."/>
            <person name="Chen G."/>
            <person name="Saunders D."/>
            <person name="Sodergren E.J."/>
            <person name="Davis P."/>
            <person name="Kerhornou A."/>
            <person name="Nie X."/>
            <person name="Hall N."/>
            <person name="Anjard C."/>
            <person name="Hemphill L."/>
            <person name="Bason N."/>
            <person name="Farbrother P."/>
            <person name="Desany B."/>
            <person name="Just E."/>
            <person name="Morio T."/>
            <person name="Rost R."/>
            <person name="Churcher C.M."/>
            <person name="Cooper J."/>
            <person name="Haydock S."/>
            <person name="van Driessche N."/>
            <person name="Cronin A."/>
            <person name="Goodhead I."/>
            <person name="Muzny D.M."/>
            <person name="Mourier T."/>
            <person name="Pain A."/>
            <person name="Lu M."/>
            <person name="Harper D."/>
            <person name="Lindsay R."/>
            <person name="Hauser H."/>
            <person name="James K.D."/>
            <person name="Quiles M."/>
            <person name="Madan Babu M."/>
            <person name="Saito T."/>
            <person name="Buchrieser C."/>
            <person name="Wardroper A."/>
            <person name="Felder M."/>
            <person name="Thangavelu M."/>
            <person name="Johnson D."/>
            <person name="Knights A."/>
            <person name="Loulseged H."/>
            <person name="Mungall K.L."/>
            <person name="Oliver K."/>
            <person name="Price C."/>
            <person name="Quail M.A."/>
            <person name="Urushihara H."/>
            <person name="Hernandez J."/>
            <person name="Rabbinowitsch E."/>
            <person name="Steffen D."/>
            <person name="Sanders M."/>
            <person name="Ma J."/>
            <person name="Kohara Y."/>
            <person name="Sharp S."/>
            <person name="Simmonds M.N."/>
            <person name="Spiegler S."/>
            <person name="Tivey A."/>
            <person name="Sugano S."/>
            <person name="White B."/>
            <person name="Walker D."/>
            <person name="Woodward J.R."/>
            <person name="Winckler T."/>
            <person name="Tanaka Y."/>
            <person name="Shaulsky G."/>
            <person name="Schleicher M."/>
            <person name="Weinstock G.M."/>
            <person name="Rosenthal A."/>
            <person name="Cox E.C."/>
            <person name="Chisholm R.L."/>
            <person name="Gibbs R.A."/>
            <person name="Loomis W.F."/>
            <person name="Platzer M."/>
            <person name="Kay R.R."/>
            <person name="Williams J.G."/>
            <person name="Dear P.H."/>
            <person name="Noegel A.A."/>
            <person name="Barrell B.G."/>
            <person name="Kuspa A."/>
        </authorList>
    </citation>
    <scope>NUCLEOTIDE SEQUENCE [LARGE SCALE GENOMIC DNA]</scope>
    <source>
        <strain>AX4</strain>
    </source>
</reference>
<reference evidence="9" key="2">
    <citation type="journal article" date="2006" name="Eur. J. Cell Biol.">
        <title>Characterization of the Ste20-like kinase Krs1 of Dictyostelium discoideum.</title>
        <authorList>
            <person name="Arasada R."/>
            <person name="Son H."/>
            <person name="Ramalingam N."/>
            <person name="Eichinger L."/>
            <person name="Schleicher M."/>
            <person name="Rohlfs M."/>
        </authorList>
    </citation>
    <scope>IDENTIFICATION</scope>
</reference>
<accession>Q55GC2</accession>
<proteinExistence type="inferred from homology"/>